<keyword id="KW-0037">Angiogenesis</keyword>
<keyword id="KW-0963">Cytoplasm</keyword>
<keyword id="KW-0217">Developmental protein</keyword>
<keyword id="KW-0221">Differentiation</keyword>
<keyword id="KW-1015">Disulfide bond</keyword>
<keyword id="KW-0238">DNA-binding</keyword>
<keyword id="KW-0255">Endonuclease</keyword>
<keyword id="KW-0378">Hydrolase</keyword>
<keyword id="KW-0540">Nuclease</keyword>
<keyword id="KW-0539">Nucleus</keyword>
<keyword id="KW-0652">Protein synthesis inhibitor</keyword>
<keyword id="KW-0873">Pyrrolidone carboxylic acid</keyword>
<keyword id="KW-0964">Secreted</keyword>
<keyword id="KW-0732">Signal</keyword>
<keyword id="KW-0346">Stress response</keyword>
<proteinExistence type="inferred from homology"/>
<comment type="function">
    <text evidence="1 2">Secreted ribonuclease that can either promote or restrict cell proliferation of target cells, depending on the context. Endocytosed in target cells via its receptor PLXNB2 and translocates to the cytoplasm or nucleus. Under stress conditions, localizes to the cytoplasm and promotes the assembly of stress granules (SGs): specifically cleaves a subset of tRNAs within anticodon loops to produce tRNA-derived stress-induced fragments (tiRNAs), resulting in translation repression and inhibition of cell proliferation (By similarity). tiRNas also prevent formation of apoptosome, thereby promoting cell survival (By similarity). Preferentially cleaves RNAs between a pyrimidine and an adenosine residue, suggesting that it cleaves the anticodon loop of tRNA(Ala) (32-UUAGCAU-38) after positions 33 and 36. Cleaves a subset of tRNAs, including tRNA(Ala), tRNA(Glu), tRNA(Gly), tRNA(Lys), tRNA(Val), tRNA(His), tRNA(Asp) and tRNA(Sec). Under growth conditions and in differentiated cells, translocates to the nucleus and stimulates ribosomal RNA (rRNA) transcription, including that containing the initiation site sequences of 45S rRNA, thereby promoting cell growth and proliferation. Angiogenin induces vascularization of normal and malignant tissues via its ability to promote rRNA transcription. Involved in hematopoietic stem and progenitor cell (HSPC) growth and survival by promoting rRNA transcription in growth conditions and inhibiting translation in response to stress, respectively. Mediates the crosstalk between myeloid and intestinal epithelial cells to protect the intestinal epithelial barrier integrity: secreted by myeloid cells and promotes intestinal epithelial cells proliferation and survival (By similarity). Also mediates osteoclast-endothelial cell crosstalk in growing bone: produced by osteoclasts and protects the neighboring vascular cells against senescence by promoting rRNA transcription (By similarity).</text>
</comment>
<comment type="activity regulation">
    <text evidence="1">Has weak tRNA ribonuclease activity by itself due to partial autoinhibition by its C-terminus, which folds into a short alpha-helix that partially occludes the substrate-binding site. In absence of stress, the ribonuclease activity is inhibited by RNH1 in the cytoplasm. In response to stress, dissociates from RNH1 in the cytoplasm and associates with cytoplasmic ribosomes with vacant A-sites: ribosomes directly activate the tRNA ribonuclease activity of ANG by refolding the C-terminal alpha-helix. In response to stress, the angiogenic activity of ANG is inhibited by RNH1 in the nucleus.</text>
</comment>
<comment type="subunit">
    <text evidence="1">Homodimer. Interacts with RNH1; inhibiting ANG ribonuclease activity. Interacts with PCNA.</text>
</comment>
<comment type="subcellular location">
    <subcellularLocation>
        <location evidence="1">Secreted</location>
    </subcellularLocation>
    <subcellularLocation>
        <location evidence="1">Nucleus</location>
    </subcellularLocation>
    <subcellularLocation>
        <location evidence="1">Nucleus</location>
        <location evidence="1">Nucleolus</location>
    </subcellularLocation>
    <subcellularLocation>
        <location evidence="1">Cytoplasm</location>
        <location evidence="1">Stress granule</location>
    </subcellularLocation>
    <text evidence="1">The secreted protein is rapidly endocytosed by target cells following interaction with PLXNB2 receptor and translocated to the cytoplasm and nucleus. In the nucleus, accumulates in the nucleolus and binds to DNA.</text>
</comment>
<comment type="similarity">
    <text evidence="3">Belongs to the pancreatic ribonuclease family.</text>
</comment>
<protein>
    <recommendedName>
        <fullName>Angiogenin</fullName>
        <ecNumber evidence="1">3.1.27.-</ecNumber>
    </recommendedName>
    <alternativeName>
        <fullName>Ribonuclease 5</fullName>
        <shortName>RNase 5</shortName>
    </alternativeName>
</protein>
<name>ANGI_MIOTA</name>
<gene>
    <name type="primary">ANG</name>
    <name type="synonym">RNASE5</name>
</gene>
<accession>Q8WN65</accession>
<evidence type="ECO:0000250" key="1">
    <source>
        <dbReference type="UniProtKB" id="P03950"/>
    </source>
</evidence>
<evidence type="ECO:0000250" key="2">
    <source>
        <dbReference type="UniProtKB" id="P21570"/>
    </source>
</evidence>
<evidence type="ECO:0000305" key="3"/>
<organism>
    <name type="scientific">Miopithecus talapoin</name>
    <name type="common">Angolan talapoin</name>
    <name type="synonym">Cercopithecus talapoin</name>
    <dbReference type="NCBI Taxonomy" id="36231"/>
    <lineage>
        <taxon>Eukaryota</taxon>
        <taxon>Metazoa</taxon>
        <taxon>Chordata</taxon>
        <taxon>Craniata</taxon>
        <taxon>Vertebrata</taxon>
        <taxon>Euteleostomi</taxon>
        <taxon>Mammalia</taxon>
        <taxon>Eutheria</taxon>
        <taxon>Euarchontoglires</taxon>
        <taxon>Primates</taxon>
        <taxon>Haplorrhini</taxon>
        <taxon>Catarrhini</taxon>
        <taxon>Cercopithecidae</taxon>
        <taxon>Cercopithecinae</taxon>
        <taxon>Miopithecus</taxon>
    </lineage>
</organism>
<dbReference type="EC" id="3.1.27.-" evidence="1"/>
<dbReference type="EMBL" id="AF441665">
    <property type="protein sequence ID" value="AAL61647.1"/>
    <property type="molecule type" value="Genomic_DNA"/>
</dbReference>
<dbReference type="SMR" id="Q8WN65"/>
<dbReference type="GO" id="GO:0032311">
    <property type="term" value="C:angiogenin-PRI complex"/>
    <property type="evidence" value="ECO:0000250"/>
    <property type="project" value="UniProtKB"/>
</dbReference>
<dbReference type="GO" id="GO:0005604">
    <property type="term" value="C:basement membrane"/>
    <property type="evidence" value="ECO:0000250"/>
    <property type="project" value="UniProtKB"/>
</dbReference>
<dbReference type="GO" id="GO:0005737">
    <property type="term" value="C:cytoplasm"/>
    <property type="evidence" value="ECO:0000250"/>
    <property type="project" value="UniProtKB"/>
</dbReference>
<dbReference type="GO" id="GO:0010494">
    <property type="term" value="C:cytoplasmic stress granule"/>
    <property type="evidence" value="ECO:0007669"/>
    <property type="project" value="UniProtKB-SubCell"/>
</dbReference>
<dbReference type="GO" id="GO:0030139">
    <property type="term" value="C:endocytic vesicle"/>
    <property type="evidence" value="ECO:0000250"/>
    <property type="project" value="UniProtKB"/>
</dbReference>
<dbReference type="GO" id="GO:0005615">
    <property type="term" value="C:extracellular space"/>
    <property type="evidence" value="ECO:0000250"/>
    <property type="project" value="UniProtKB"/>
</dbReference>
<dbReference type="GO" id="GO:0030426">
    <property type="term" value="C:growth cone"/>
    <property type="evidence" value="ECO:0000250"/>
    <property type="project" value="UniProtKB"/>
</dbReference>
<dbReference type="GO" id="GO:0043025">
    <property type="term" value="C:neuronal cell body"/>
    <property type="evidence" value="ECO:0000250"/>
    <property type="project" value="UniProtKB"/>
</dbReference>
<dbReference type="GO" id="GO:0005730">
    <property type="term" value="C:nucleolus"/>
    <property type="evidence" value="ECO:0000250"/>
    <property type="project" value="UniProtKB"/>
</dbReference>
<dbReference type="GO" id="GO:0005634">
    <property type="term" value="C:nucleus"/>
    <property type="evidence" value="ECO:0000250"/>
    <property type="project" value="UniProtKB"/>
</dbReference>
<dbReference type="GO" id="GO:0003779">
    <property type="term" value="F:actin binding"/>
    <property type="evidence" value="ECO:0000250"/>
    <property type="project" value="UniProtKB"/>
</dbReference>
<dbReference type="GO" id="GO:0005507">
    <property type="term" value="F:copper ion binding"/>
    <property type="evidence" value="ECO:0000250"/>
    <property type="project" value="UniProtKB"/>
</dbReference>
<dbReference type="GO" id="GO:0003677">
    <property type="term" value="F:DNA binding"/>
    <property type="evidence" value="ECO:0007669"/>
    <property type="project" value="UniProtKB-KW"/>
</dbReference>
<dbReference type="GO" id="GO:0004519">
    <property type="term" value="F:endonuclease activity"/>
    <property type="evidence" value="ECO:0007669"/>
    <property type="project" value="UniProtKB-KW"/>
</dbReference>
<dbReference type="GO" id="GO:0008201">
    <property type="term" value="F:heparin binding"/>
    <property type="evidence" value="ECO:0000250"/>
    <property type="project" value="UniProtKB"/>
</dbReference>
<dbReference type="GO" id="GO:0042803">
    <property type="term" value="F:protein homodimerization activity"/>
    <property type="evidence" value="ECO:0000250"/>
    <property type="project" value="UniProtKB"/>
</dbReference>
<dbReference type="GO" id="GO:0004540">
    <property type="term" value="F:RNA nuclease activity"/>
    <property type="evidence" value="ECO:0000250"/>
    <property type="project" value="UniProtKB"/>
</dbReference>
<dbReference type="GO" id="GO:0005102">
    <property type="term" value="F:signaling receptor binding"/>
    <property type="evidence" value="ECO:0000250"/>
    <property type="project" value="UniProtKB"/>
</dbReference>
<dbReference type="GO" id="GO:0004549">
    <property type="term" value="F:tRNA-specific ribonuclease activity"/>
    <property type="evidence" value="ECO:0000250"/>
    <property type="project" value="UniProtKB"/>
</dbReference>
<dbReference type="GO" id="GO:0030041">
    <property type="term" value="P:actin filament polymerization"/>
    <property type="evidence" value="ECO:0000250"/>
    <property type="project" value="UniProtKB"/>
</dbReference>
<dbReference type="GO" id="GO:0001525">
    <property type="term" value="P:angiogenesis"/>
    <property type="evidence" value="ECO:0000250"/>
    <property type="project" value="UniProtKB"/>
</dbReference>
<dbReference type="GO" id="GO:0019731">
    <property type="term" value="P:antibacterial humoral response"/>
    <property type="evidence" value="ECO:0007669"/>
    <property type="project" value="TreeGrafter"/>
</dbReference>
<dbReference type="GO" id="GO:0061844">
    <property type="term" value="P:antimicrobial humoral immune response mediated by antimicrobial peptide"/>
    <property type="evidence" value="ECO:0007669"/>
    <property type="project" value="TreeGrafter"/>
</dbReference>
<dbReference type="GO" id="GO:0050830">
    <property type="term" value="P:defense response to Gram-positive bacterium"/>
    <property type="evidence" value="ECO:0007669"/>
    <property type="project" value="TreeGrafter"/>
</dbReference>
<dbReference type="GO" id="GO:0071425">
    <property type="term" value="P:hematopoietic stem cell proliferation"/>
    <property type="evidence" value="ECO:0000250"/>
    <property type="project" value="UniProtKB"/>
</dbReference>
<dbReference type="GO" id="GO:0045087">
    <property type="term" value="P:innate immune response"/>
    <property type="evidence" value="ECO:0007669"/>
    <property type="project" value="TreeGrafter"/>
</dbReference>
<dbReference type="GO" id="GO:0043066">
    <property type="term" value="P:negative regulation of apoptotic process"/>
    <property type="evidence" value="ECO:0000250"/>
    <property type="project" value="UniProtKB"/>
</dbReference>
<dbReference type="GO" id="GO:0048662">
    <property type="term" value="P:negative regulation of smooth muscle cell proliferation"/>
    <property type="evidence" value="ECO:0000250"/>
    <property type="project" value="UniProtKB"/>
</dbReference>
<dbReference type="GO" id="GO:0032055">
    <property type="term" value="P:negative regulation of translation in response to stress"/>
    <property type="evidence" value="ECO:0000250"/>
    <property type="project" value="UniProtKB"/>
</dbReference>
<dbReference type="GO" id="GO:0001938">
    <property type="term" value="P:positive regulation of endothelial cell proliferation"/>
    <property type="evidence" value="ECO:0000250"/>
    <property type="project" value="UniProtKB"/>
</dbReference>
<dbReference type="GO" id="GO:0050714">
    <property type="term" value="P:positive regulation of protein secretion"/>
    <property type="evidence" value="ECO:0000250"/>
    <property type="project" value="UniProtKB"/>
</dbReference>
<dbReference type="GO" id="GO:0001666">
    <property type="term" value="P:response to hypoxia"/>
    <property type="evidence" value="ECO:0000250"/>
    <property type="project" value="UniProtKB"/>
</dbReference>
<dbReference type="GO" id="GO:0009303">
    <property type="term" value="P:rRNA transcription"/>
    <property type="evidence" value="ECO:0000250"/>
    <property type="project" value="UniProtKB"/>
</dbReference>
<dbReference type="GO" id="GO:0023052">
    <property type="term" value="P:signaling"/>
    <property type="evidence" value="ECO:0000250"/>
    <property type="project" value="UniProtKB"/>
</dbReference>
<dbReference type="GO" id="GO:0034063">
    <property type="term" value="P:stress granule assembly"/>
    <property type="evidence" value="ECO:0000250"/>
    <property type="project" value="UniProtKB"/>
</dbReference>
<dbReference type="CDD" id="cd06265">
    <property type="entry name" value="RNase_A_canonical"/>
    <property type="match status" value="1"/>
</dbReference>
<dbReference type="FunFam" id="3.10.130.10:FF:000001">
    <property type="entry name" value="Ribonuclease pancreatic"/>
    <property type="match status" value="1"/>
</dbReference>
<dbReference type="Gene3D" id="3.10.130.10">
    <property type="entry name" value="Ribonuclease A-like domain"/>
    <property type="match status" value="1"/>
</dbReference>
<dbReference type="InterPro" id="IPR001427">
    <property type="entry name" value="RNaseA"/>
</dbReference>
<dbReference type="InterPro" id="IPR036816">
    <property type="entry name" value="RNaseA-like_dom_sf"/>
</dbReference>
<dbReference type="InterPro" id="IPR023411">
    <property type="entry name" value="RNaseA_AS"/>
</dbReference>
<dbReference type="InterPro" id="IPR023412">
    <property type="entry name" value="RNaseA_domain"/>
</dbReference>
<dbReference type="PANTHER" id="PTHR11437:SF60">
    <property type="entry name" value="ANGIOGENIN"/>
    <property type="match status" value="1"/>
</dbReference>
<dbReference type="PANTHER" id="PTHR11437">
    <property type="entry name" value="RIBONUCLEASE"/>
    <property type="match status" value="1"/>
</dbReference>
<dbReference type="Pfam" id="PF00074">
    <property type="entry name" value="RnaseA"/>
    <property type="match status" value="1"/>
</dbReference>
<dbReference type="PRINTS" id="PR00794">
    <property type="entry name" value="RIBONUCLEASE"/>
</dbReference>
<dbReference type="SMART" id="SM00092">
    <property type="entry name" value="RNAse_Pc"/>
    <property type="match status" value="1"/>
</dbReference>
<dbReference type="SUPFAM" id="SSF54076">
    <property type="entry name" value="RNase A-like"/>
    <property type="match status" value="1"/>
</dbReference>
<dbReference type="PROSITE" id="PS00127">
    <property type="entry name" value="RNASE_PANCREATIC"/>
    <property type="match status" value="1"/>
</dbReference>
<feature type="signal peptide" evidence="1">
    <location>
        <begin position="1"/>
        <end position="24"/>
    </location>
</feature>
<feature type="chain" id="PRO_0000030845" description="Angiogenin">
    <location>
        <begin position="25"/>
        <end position="146"/>
    </location>
</feature>
<feature type="short sequence motif" description="Nucleolar localization signal" evidence="1">
    <location>
        <begin position="55"/>
        <end position="59"/>
    </location>
</feature>
<feature type="active site" description="Proton acceptor" evidence="1">
    <location>
        <position position="37"/>
    </location>
</feature>
<feature type="active site" description="Proton donor" evidence="1">
    <location>
        <position position="138"/>
    </location>
</feature>
<feature type="binding site" evidence="1">
    <location>
        <position position="45"/>
    </location>
    <ligand>
        <name>tRNA</name>
        <dbReference type="ChEBI" id="CHEBI:17843"/>
    </ligand>
</feature>
<feature type="binding site" evidence="1">
    <location>
        <position position="105"/>
    </location>
    <ligand>
        <name>tRNA</name>
        <dbReference type="ChEBI" id="CHEBI:17843"/>
    </ligand>
</feature>
<feature type="binding site" evidence="1">
    <location>
        <position position="127"/>
    </location>
    <ligand>
        <name>tRNA</name>
        <dbReference type="ChEBI" id="CHEBI:17843"/>
    </ligand>
</feature>
<feature type="modified residue" description="Pyrrolidone carboxylic acid" evidence="1">
    <location>
        <position position="25"/>
    </location>
</feature>
<feature type="disulfide bond" evidence="1">
    <location>
        <begin position="50"/>
        <end position="105"/>
    </location>
</feature>
<feature type="disulfide bond" evidence="1">
    <location>
        <begin position="63"/>
        <end position="116"/>
    </location>
</feature>
<feature type="disulfide bond" evidence="1">
    <location>
        <begin position="81"/>
        <end position="131"/>
    </location>
</feature>
<sequence length="146" mass="16486">MVMGLGLFLLVFMLGLGLTSPTLAQDNSRYRDFLSKHYDARPQGRNDRYCDSMMRRQGMTSPCKDINTFIHGNRRSIRAICGDENGNPYGENLRISRTPFQVTTCNLRGGSPRPPCRYRATAGFRNIVVACENGLPVHLDQSIFRP</sequence>
<reference key="1">
    <citation type="journal article" date="2002" name="Mol. Biol. Evol.">
        <title>Diversifying selection of the tumor-growth promoter angiogenin in primate evolution.</title>
        <authorList>
            <person name="Zhang J."/>
            <person name="Rosenberg H.F."/>
        </authorList>
    </citation>
    <scope>NUCLEOTIDE SEQUENCE [GENOMIC DNA]</scope>
</reference>